<sequence>MPAVTYEHIKTCKQSGARLGIVHTPHGSFETPMFMPVGTKATVKTMSPEELRQIEAKIILGNTYHLWLQPGNDIIKHAGGLHKFMNWDGPILTDSGGFQVFSLSNLRKITEEGVEFRHHTNGSKLFLSPEKSMQIQNDLGSDIMMAFDECPPMPAEYDYVKKSIERTTRWAKRCLDAHQRPEDQALFGIIQGGEYEDLREQSAKDLVELDFPGYAIGGLSVGEPKPVMYKMVEHTEQFMPKDKPRYLMGVGSPDALIECSIRGMDMFDCVLPTRIARNGTCMTSQGRLVIKNAKFADDLRPLDENCDCYTCQNYSRAYIRHLIKAEETFGIRLTTIHNLHFLLKLMEDIRQAIREDRLLDFKEEFFEQYGLNVENPKNF</sequence>
<name>TGT_STAA3</name>
<accession>Q2FG88</accession>
<protein>
    <recommendedName>
        <fullName evidence="1">Queuine tRNA-ribosyltransferase</fullName>
        <ecNumber evidence="1">2.4.2.29</ecNumber>
    </recommendedName>
    <alternativeName>
        <fullName evidence="1">Guanine insertion enzyme</fullName>
    </alternativeName>
    <alternativeName>
        <fullName evidence="1">tRNA-guanine transglycosylase</fullName>
    </alternativeName>
</protein>
<evidence type="ECO:0000255" key="1">
    <source>
        <dbReference type="HAMAP-Rule" id="MF_00168"/>
    </source>
</evidence>
<gene>
    <name evidence="1" type="primary">tgt</name>
    <name type="ordered locus">SAUSA300_1595</name>
</gene>
<proteinExistence type="inferred from homology"/>
<keyword id="KW-0328">Glycosyltransferase</keyword>
<keyword id="KW-0479">Metal-binding</keyword>
<keyword id="KW-0671">Queuosine biosynthesis</keyword>
<keyword id="KW-0808">Transferase</keyword>
<keyword id="KW-0819">tRNA processing</keyword>
<keyword id="KW-0862">Zinc</keyword>
<dbReference type="EC" id="2.4.2.29" evidence="1"/>
<dbReference type="EMBL" id="CP000255">
    <property type="protein sequence ID" value="ABD22610.1"/>
    <property type="molecule type" value="Genomic_DNA"/>
</dbReference>
<dbReference type="RefSeq" id="WP_001112045.1">
    <property type="nucleotide sequence ID" value="NZ_CP027476.1"/>
</dbReference>
<dbReference type="SMR" id="Q2FG88"/>
<dbReference type="KEGG" id="saa:SAUSA300_1595"/>
<dbReference type="HOGENOM" id="CLU_022060_0_1_9"/>
<dbReference type="OMA" id="IDLFDCV"/>
<dbReference type="UniPathway" id="UPA00392"/>
<dbReference type="Proteomes" id="UP000001939">
    <property type="component" value="Chromosome"/>
</dbReference>
<dbReference type="GO" id="GO:0005829">
    <property type="term" value="C:cytosol"/>
    <property type="evidence" value="ECO:0007669"/>
    <property type="project" value="TreeGrafter"/>
</dbReference>
<dbReference type="GO" id="GO:0046872">
    <property type="term" value="F:metal ion binding"/>
    <property type="evidence" value="ECO:0007669"/>
    <property type="project" value="UniProtKB-KW"/>
</dbReference>
<dbReference type="GO" id="GO:0008479">
    <property type="term" value="F:tRNA-guanosine(34) queuine transglycosylase activity"/>
    <property type="evidence" value="ECO:0007669"/>
    <property type="project" value="UniProtKB-UniRule"/>
</dbReference>
<dbReference type="GO" id="GO:0008616">
    <property type="term" value="P:queuosine biosynthetic process"/>
    <property type="evidence" value="ECO:0007669"/>
    <property type="project" value="UniProtKB-UniRule"/>
</dbReference>
<dbReference type="GO" id="GO:0002099">
    <property type="term" value="P:tRNA wobble guanine modification"/>
    <property type="evidence" value="ECO:0007669"/>
    <property type="project" value="TreeGrafter"/>
</dbReference>
<dbReference type="GO" id="GO:0101030">
    <property type="term" value="P:tRNA-guanine transglycosylation"/>
    <property type="evidence" value="ECO:0007669"/>
    <property type="project" value="InterPro"/>
</dbReference>
<dbReference type="FunFam" id="3.20.20.105:FF:000001">
    <property type="entry name" value="Queuine tRNA-ribosyltransferase"/>
    <property type="match status" value="1"/>
</dbReference>
<dbReference type="Gene3D" id="3.20.20.105">
    <property type="entry name" value="Queuine tRNA-ribosyltransferase-like"/>
    <property type="match status" value="1"/>
</dbReference>
<dbReference type="HAMAP" id="MF_00168">
    <property type="entry name" value="Q_tRNA_Tgt"/>
    <property type="match status" value="1"/>
</dbReference>
<dbReference type="InterPro" id="IPR050076">
    <property type="entry name" value="ArchSynthase1/Queuine_TRR"/>
</dbReference>
<dbReference type="InterPro" id="IPR004803">
    <property type="entry name" value="TGT"/>
</dbReference>
<dbReference type="InterPro" id="IPR036511">
    <property type="entry name" value="TGT-like_sf"/>
</dbReference>
<dbReference type="InterPro" id="IPR002616">
    <property type="entry name" value="tRNA_ribo_trans-like"/>
</dbReference>
<dbReference type="NCBIfam" id="TIGR00430">
    <property type="entry name" value="Q_tRNA_tgt"/>
    <property type="match status" value="1"/>
</dbReference>
<dbReference type="NCBIfam" id="TIGR00449">
    <property type="entry name" value="tgt_general"/>
    <property type="match status" value="1"/>
</dbReference>
<dbReference type="PANTHER" id="PTHR46499">
    <property type="entry name" value="QUEUINE TRNA-RIBOSYLTRANSFERASE"/>
    <property type="match status" value="1"/>
</dbReference>
<dbReference type="PANTHER" id="PTHR46499:SF1">
    <property type="entry name" value="QUEUINE TRNA-RIBOSYLTRANSFERASE"/>
    <property type="match status" value="1"/>
</dbReference>
<dbReference type="Pfam" id="PF01702">
    <property type="entry name" value="TGT"/>
    <property type="match status" value="1"/>
</dbReference>
<dbReference type="SUPFAM" id="SSF51713">
    <property type="entry name" value="tRNA-guanine transglycosylase"/>
    <property type="match status" value="1"/>
</dbReference>
<feature type="chain" id="PRO_1000016862" description="Queuine tRNA-ribosyltransferase">
    <location>
        <begin position="1"/>
        <end position="379"/>
    </location>
</feature>
<feature type="region of interest" description="RNA binding" evidence="1">
    <location>
        <begin position="249"/>
        <end position="255"/>
    </location>
</feature>
<feature type="region of interest" description="RNA binding; important for wobble base 34 recognition" evidence="1">
    <location>
        <begin position="273"/>
        <end position="277"/>
    </location>
</feature>
<feature type="active site" description="Proton acceptor" evidence="1">
    <location>
        <position position="94"/>
    </location>
</feature>
<feature type="active site" description="Nucleophile" evidence="1">
    <location>
        <position position="268"/>
    </location>
</feature>
<feature type="binding site" evidence="1">
    <location>
        <begin position="94"/>
        <end position="98"/>
    </location>
    <ligand>
        <name>substrate</name>
    </ligand>
</feature>
<feature type="binding site" evidence="1">
    <location>
        <position position="148"/>
    </location>
    <ligand>
        <name>substrate</name>
    </ligand>
</feature>
<feature type="binding site" evidence="1">
    <location>
        <position position="191"/>
    </location>
    <ligand>
        <name>substrate</name>
    </ligand>
</feature>
<feature type="binding site" evidence="1">
    <location>
        <position position="218"/>
    </location>
    <ligand>
        <name>substrate</name>
    </ligand>
</feature>
<feature type="binding site" evidence="1">
    <location>
        <position position="306"/>
    </location>
    <ligand>
        <name>Zn(2+)</name>
        <dbReference type="ChEBI" id="CHEBI:29105"/>
    </ligand>
</feature>
<feature type="binding site" evidence="1">
    <location>
        <position position="308"/>
    </location>
    <ligand>
        <name>Zn(2+)</name>
        <dbReference type="ChEBI" id="CHEBI:29105"/>
    </ligand>
</feature>
<feature type="binding site" evidence="1">
    <location>
        <position position="311"/>
    </location>
    <ligand>
        <name>Zn(2+)</name>
        <dbReference type="ChEBI" id="CHEBI:29105"/>
    </ligand>
</feature>
<feature type="binding site" evidence="1">
    <location>
        <position position="337"/>
    </location>
    <ligand>
        <name>Zn(2+)</name>
        <dbReference type="ChEBI" id="CHEBI:29105"/>
    </ligand>
</feature>
<organism>
    <name type="scientific">Staphylococcus aureus (strain USA300)</name>
    <dbReference type="NCBI Taxonomy" id="367830"/>
    <lineage>
        <taxon>Bacteria</taxon>
        <taxon>Bacillati</taxon>
        <taxon>Bacillota</taxon>
        <taxon>Bacilli</taxon>
        <taxon>Bacillales</taxon>
        <taxon>Staphylococcaceae</taxon>
        <taxon>Staphylococcus</taxon>
    </lineage>
</organism>
<reference key="1">
    <citation type="journal article" date="2006" name="Lancet">
        <title>Complete genome sequence of USA300, an epidemic clone of community-acquired meticillin-resistant Staphylococcus aureus.</title>
        <authorList>
            <person name="Diep B.A."/>
            <person name="Gill S.R."/>
            <person name="Chang R.F."/>
            <person name="Phan T.H."/>
            <person name="Chen J.H."/>
            <person name="Davidson M.G."/>
            <person name="Lin F."/>
            <person name="Lin J."/>
            <person name="Carleton H.A."/>
            <person name="Mongodin E.F."/>
            <person name="Sensabaugh G.F."/>
            <person name="Perdreau-Remington F."/>
        </authorList>
    </citation>
    <scope>NUCLEOTIDE SEQUENCE [LARGE SCALE GENOMIC DNA]</scope>
    <source>
        <strain>USA300</strain>
    </source>
</reference>
<comment type="function">
    <text evidence="1">Catalyzes the base-exchange of a guanine (G) residue with the queuine precursor 7-aminomethyl-7-deazaguanine (PreQ1) at position 34 (anticodon wobble position) in tRNAs with GU(N) anticodons (tRNA-Asp, -Asn, -His and -Tyr). Catalysis occurs through a double-displacement mechanism. The nucleophile active site attacks the C1' of nucleotide 34 to detach the guanine base from the RNA, forming a covalent enzyme-RNA intermediate. The proton acceptor active site deprotonates the incoming PreQ1, allowing a nucleophilic attack on the C1' of the ribose to form the product. After dissociation, two additional enzymatic reactions on the tRNA convert PreQ1 to queuine (Q), resulting in the hypermodified nucleoside queuosine (7-(((4,5-cis-dihydroxy-2-cyclopenten-1-yl)amino)methyl)-7-deazaguanosine).</text>
</comment>
<comment type="catalytic activity">
    <reaction evidence="1">
        <text>7-aminomethyl-7-carbaguanine + guanosine(34) in tRNA = 7-aminomethyl-7-carbaguanosine(34) in tRNA + guanine</text>
        <dbReference type="Rhea" id="RHEA:24104"/>
        <dbReference type="Rhea" id="RHEA-COMP:10341"/>
        <dbReference type="Rhea" id="RHEA-COMP:10342"/>
        <dbReference type="ChEBI" id="CHEBI:16235"/>
        <dbReference type="ChEBI" id="CHEBI:58703"/>
        <dbReference type="ChEBI" id="CHEBI:74269"/>
        <dbReference type="ChEBI" id="CHEBI:82833"/>
        <dbReference type="EC" id="2.4.2.29"/>
    </reaction>
</comment>
<comment type="cofactor">
    <cofactor evidence="1">
        <name>Zn(2+)</name>
        <dbReference type="ChEBI" id="CHEBI:29105"/>
    </cofactor>
    <text evidence="1">Binds 1 zinc ion per subunit.</text>
</comment>
<comment type="pathway">
    <text evidence="1">tRNA modification; tRNA-queuosine biosynthesis.</text>
</comment>
<comment type="subunit">
    <text evidence="1">Homodimer. Within each dimer, one monomer is responsible for RNA recognition and catalysis, while the other monomer binds to the replacement base PreQ1.</text>
</comment>
<comment type="similarity">
    <text evidence="1">Belongs to the queuine tRNA-ribosyltransferase family.</text>
</comment>